<feature type="chain" id="PRO_0000296923" description="Putative manganese efflux pump MntP">
    <location>
        <begin position="1"/>
        <end position="190"/>
    </location>
</feature>
<feature type="transmembrane region" description="Helical" evidence="1">
    <location>
        <begin position="3"/>
        <end position="23"/>
    </location>
</feature>
<feature type="transmembrane region" description="Helical" evidence="1">
    <location>
        <begin position="37"/>
        <end position="57"/>
    </location>
</feature>
<feature type="transmembrane region" description="Helical" evidence="1">
    <location>
        <begin position="72"/>
        <end position="88"/>
    </location>
</feature>
<feature type="transmembrane region" description="Helical" evidence="1">
    <location>
        <begin position="111"/>
        <end position="131"/>
    </location>
</feature>
<feature type="transmembrane region" description="Helical" evidence="1">
    <location>
        <begin position="138"/>
        <end position="158"/>
    </location>
</feature>
<feature type="transmembrane region" description="Helical" evidence="1">
    <location>
        <begin position="164"/>
        <end position="184"/>
    </location>
</feature>
<sequence length="190" mass="20112">MPFLQIFLLSIGVAADAFACSVVRGTAIRVNLFKRALVLAGIFGVFQAAMPLIGWVIGRFFAGITFIAEIDHWIAFALLGVVGAKMIWDAFQPEDDETIVDDGRVQFRPAIILGLATSIDALAVGMGLAFVEVSILKVALSMGLITFALSLVGAWIGHHGGGKFGKWATILGGIILIGIGANIVYEHLSA</sequence>
<reference key="1">
    <citation type="journal article" date="2007" name="Microbiology">
        <title>Comparative analysis of the Corynebacterium glutamicum group and complete genome sequence of strain R.</title>
        <authorList>
            <person name="Yukawa H."/>
            <person name="Omumasaba C.A."/>
            <person name="Nonaka H."/>
            <person name="Kos P."/>
            <person name="Okai N."/>
            <person name="Suzuki N."/>
            <person name="Suda M."/>
            <person name="Tsuge Y."/>
            <person name="Watanabe J."/>
            <person name="Ikeda Y."/>
            <person name="Vertes A.A."/>
            <person name="Inui M."/>
        </authorList>
    </citation>
    <scope>NUCLEOTIDE SEQUENCE [LARGE SCALE GENOMIC DNA]</scope>
    <source>
        <strain>R</strain>
    </source>
</reference>
<name>MNTP_CORGB</name>
<keyword id="KW-1003">Cell membrane</keyword>
<keyword id="KW-0406">Ion transport</keyword>
<keyword id="KW-0464">Manganese</keyword>
<keyword id="KW-0472">Membrane</keyword>
<keyword id="KW-0812">Transmembrane</keyword>
<keyword id="KW-1133">Transmembrane helix</keyword>
<keyword id="KW-0813">Transport</keyword>
<comment type="function">
    <text evidence="1">Probably functions as a manganese efflux pump.</text>
</comment>
<comment type="subcellular location">
    <subcellularLocation>
        <location evidence="1">Cell membrane</location>
        <topology evidence="1">Multi-pass membrane protein</topology>
    </subcellularLocation>
</comment>
<comment type="similarity">
    <text evidence="1">Belongs to the MntP (TC 9.B.29) family.</text>
</comment>
<comment type="sequence caution" evidence="2">
    <conflict type="erroneous initiation">
        <sequence resource="EMBL-CDS" id="BAF54522"/>
    </conflict>
</comment>
<dbReference type="EMBL" id="AP009044">
    <property type="protein sequence ID" value="BAF54522.1"/>
    <property type="status" value="ALT_INIT"/>
    <property type="molecule type" value="Genomic_DNA"/>
</dbReference>
<dbReference type="RefSeq" id="WP_003856204.1">
    <property type="nucleotide sequence ID" value="NC_009342.1"/>
</dbReference>
<dbReference type="SMR" id="A4QE56"/>
<dbReference type="KEGG" id="cgt:cgR_1530"/>
<dbReference type="HOGENOM" id="CLU_096410_0_0_11"/>
<dbReference type="PhylomeDB" id="A4QE56"/>
<dbReference type="Proteomes" id="UP000006698">
    <property type="component" value="Chromosome"/>
</dbReference>
<dbReference type="GO" id="GO:0005886">
    <property type="term" value="C:plasma membrane"/>
    <property type="evidence" value="ECO:0007669"/>
    <property type="project" value="UniProtKB-SubCell"/>
</dbReference>
<dbReference type="GO" id="GO:0005384">
    <property type="term" value="F:manganese ion transmembrane transporter activity"/>
    <property type="evidence" value="ECO:0007669"/>
    <property type="project" value="UniProtKB-UniRule"/>
</dbReference>
<dbReference type="HAMAP" id="MF_01521">
    <property type="entry name" value="MntP_pump"/>
    <property type="match status" value="1"/>
</dbReference>
<dbReference type="InterPro" id="IPR003810">
    <property type="entry name" value="Mntp/YtaF"/>
</dbReference>
<dbReference type="InterPro" id="IPR022929">
    <property type="entry name" value="Put_MntP"/>
</dbReference>
<dbReference type="PANTHER" id="PTHR35529">
    <property type="entry name" value="MANGANESE EFFLUX PUMP MNTP-RELATED"/>
    <property type="match status" value="1"/>
</dbReference>
<dbReference type="PANTHER" id="PTHR35529:SF1">
    <property type="entry name" value="MANGANESE EFFLUX PUMP MNTP-RELATED"/>
    <property type="match status" value="1"/>
</dbReference>
<dbReference type="Pfam" id="PF02659">
    <property type="entry name" value="Mntp"/>
    <property type="match status" value="1"/>
</dbReference>
<accession>A4QE56</accession>
<gene>
    <name evidence="1" type="primary">mntP</name>
    <name type="ordered locus">cgR_1530</name>
</gene>
<evidence type="ECO:0000255" key="1">
    <source>
        <dbReference type="HAMAP-Rule" id="MF_01521"/>
    </source>
</evidence>
<evidence type="ECO:0000305" key="2"/>
<proteinExistence type="inferred from homology"/>
<organism>
    <name type="scientific">Corynebacterium glutamicum (strain R)</name>
    <dbReference type="NCBI Taxonomy" id="340322"/>
    <lineage>
        <taxon>Bacteria</taxon>
        <taxon>Bacillati</taxon>
        <taxon>Actinomycetota</taxon>
        <taxon>Actinomycetes</taxon>
        <taxon>Mycobacteriales</taxon>
        <taxon>Corynebacteriaceae</taxon>
        <taxon>Corynebacterium</taxon>
    </lineage>
</organism>
<protein>
    <recommendedName>
        <fullName evidence="1">Putative manganese efflux pump MntP</fullName>
    </recommendedName>
</protein>